<keyword id="KW-0175">Coiled coil</keyword>
<keyword id="KW-0496">Mitochondrion</keyword>
<keyword id="KW-1185">Reference proteome</keyword>
<feature type="chain" id="PRO_0000326547" description="Optic atrophy 3 protein homolog">
    <location>
        <begin position="1"/>
        <end position="179"/>
    </location>
</feature>
<feature type="coiled-coil region" evidence="2">
    <location>
        <begin position="120"/>
        <end position="143"/>
    </location>
</feature>
<feature type="mutagenesis site" description="Homozygous mice have their visual function which is severely reduced, consistent with significant loss of retinal ganglion cells and degeneration of axons in the optic nerve. They also display a severe multi-systemic disease characterized by reduced lifespan (&lt;4 months), decreased weight, dilated cardiomyopathy, extrapyramidal dysfunction and gross neuro-muscular defects." evidence="3">
    <original>L</original>
    <variation>P</variation>
    <location>
        <position position="122"/>
    </location>
</feature>
<feature type="sequence conflict" description="In Ref. 1; BAC35141." evidence="4" ref="1">
    <original>T</original>
    <variation>A</variation>
    <location>
        <position position="56"/>
    </location>
</feature>
<sequence>MVVGAFPMAKLFYLGIRQVSKPLANRIKDAARRSEFFKTYICLPPAQLYHWVEMRTKMRIMGFRGTTIKPLNEEAAAELGAELLGEATIFIVGGGCLVLEYWRHQTQQRNKEEEQRAAWNALQDEVGRLALALEALQAQAQAMPSLSALEELREELQEVRGQVCNAHCTSKCQAASSKK</sequence>
<accession>Q505D7</accession>
<accession>Q8C6Z9</accession>
<organism>
    <name type="scientific">Mus musculus</name>
    <name type="common">Mouse</name>
    <dbReference type="NCBI Taxonomy" id="10090"/>
    <lineage>
        <taxon>Eukaryota</taxon>
        <taxon>Metazoa</taxon>
        <taxon>Chordata</taxon>
        <taxon>Craniata</taxon>
        <taxon>Vertebrata</taxon>
        <taxon>Euteleostomi</taxon>
        <taxon>Mammalia</taxon>
        <taxon>Eutheria</taxon>
        <taxon>Euarchontoglires</taxon>
        <taxon>Glires</taxon>
        <taxon>Rodentia</taxon>
        <taxon>Myomorpha</taxon>
        <taxon>Muroidea</taxon>
        <taxon>Muridae</taxon>
        <taxon>Murinae</taxon>
        <taxon>Mus</taxon>
        <taxon>Mus</taxon>
    </lineage>
</organism>
<reference key="1">
    <citation type="journal article" date="2005" name="Science">
        <title>The transcriptional landscape of the mammalian genome.</title>
        <authorList>
            <person name="Carninci P."/>
            <person name="Kasukawa T."/>
            <person name="Katayama S."/>
            <person name="Gough J."/>
            <person name="Frith M.C."/>
            <person name="Maeda N."/>
            <person name="Oyama R."/>
            <person name="Ravasi T."/>
            <person name="Lenhard B."/>
            <person name="Wells C."/>
            <person name="Kodzius R."/>
            <person name="Shimokawa K."/>
            <person name="Bajic V.B."/>
            <person name="Brenner S.E."/>
            <person name="Batalov S."/>
            <person name="Forrest A.R."/>
            <person name="Zavolan M."/>
            <person name="Davis M.J."/>
            <person name="Wilming L.G."/>
            <person name="Aidinis V."/>
            <person name="Allen J.E."/>
            <person name="Ambesi-Impiombato A."/>
            <person name="Apweiler R."/>
            <person name="Aturaliya R.N."/>
            <person name="Bailey T.L."/>
            <person name="Bansal M."/>
            <person name="Baxter L."/>
            <person name="Beisel K.W."/>
            <person name="Bersano T."/>
            <person name="Bono H."/>
            <person name="Chalk A.M."/>
            <person name="Chiu K.P."/>
            <person name="Choudhary V."/>
            <person name="Christoffels A."/>
            <person name="Clutterbuck D.R."/>
            <person name="Crowe M.L."/>
            <person name="Dalla E."/>
            <person name="Dalrymple B.P."/>
            <person name="de Bono B."/>
            <person name="Della Gatta G."/>
            <person name="di Bernardo D."/>
            <person name="Down T."/>
            <person name="Engstrom P."/>
            <person name="Fagiolini M."/>
            <person name="Faulkner G."/>
            <person name="Fletcher C.F."/>
            <person name="Fukushima T."/>
            <person name="Furuno M."/>
            <person name="Futaki S."/>
            <person name="Gariboldi M."/>
            <person name="Georgii-Hemming P."/>
            <person name="Gingeras T.R."/>
            <person name="Gojobori T."/>
            <person name="Green R.E."/>
            <person name="Gustincich S."/>
            <person name="Harbers M."/>
            <person name="Hayashi Y."/>
            <person name="Hensch T.K."/>
            <person name="Hirokawa N."/>
            <person name="Hill D."/>
            <person name="Huminiecki L."/>
            <person name="Iacono M."/>
            <person name="Ikeo K."/>
            <person name="Iwama A."/>
            <person name="Ishikawa T."/>
            <person name="Jakt M."/>
            <person name="Kanapin A."/>
            <person name="Katoh M."/>
            <person name="Kawasawa Y."/>
            <person name="Kelso J."/>
            <person name="Kitamura H."/>
            <person name="Kitano H."/>
            <person name="Kollias G."/>
            <person name="Krishnan S.P."/>
            <person name="Kruger A."/>
            <person name="Kummerfeld S.K."/>
            <person name="Kurochkin I.V."/>
            <person name="Lareau L.F."/>
            <person name="Lazarevic D."/>
            <person name="Lipovich L."/>
            <person name="Liu J."/>
            <person name="Liuni S."/>
            <person name="McWilliam S."/>
            <person name="Madan Babu M."/>
            <person name="Madera M."/>
            <person name="Marchionni L."/>
            <person name="Matsuda H."/>
            <person name="Matsuzawa S."/>
            <person name="Miki H."/>
            <person name="Mignone F."/>
            <person name="Miyake S."/>
            <person name="Morris K."/>
            <person name="Mottagui-Tabar S."/>
            <person name="Mulder N."/>
            <person name="Nakano N."/>
            <person name="Nakauchi H."/>
            <person name="Ng P."/>
            <person name="Nilsson R."/>
            <person name="Nishiguchi S."/>
            <person name="Nishikawa S."/>
            <person name="Nori F."/>
            <person name="Ohara O."/>
            <person name="Okazaki Y."/>
            <person name="Orlando V."/>
            <person name="Pang K.C."/>
            <person name="Pavan W.J."/>
            <person name="Pavesi G."/>
            <person name="Pesole G."/>
            <person name="Petrovsky N."/>
            <person name="Piazza S."/>
            <person name="Reed J."/>
            <person name="Reid J.F."/>
            <person name="Ring B.Z."/>
            <person name="Ringwald M."/>
            <person name="Rost B."/>
            <person name="Ruan Y."/>
            <person name="Salzberg S.L."/>
            <person name="Sandelin A."/>
            <person name="Schneider C."/>
            <person name="Schoenbach C."/>
            <person name="Sekiguchi K."/>
            <person name="Semple C.A."/>
            <person name="Seno S."/>
            <person name="Sessa L."/>
            <person name="Sheng Y."/>
            <person name="Shibata Y."/>
            <person name="Shimada H."/>
            <person name="Shimada K."/>
            <person name="Silva D."/>
            <person name="Sinclair B."/>
            <person name="Sperling S."/>
            <person name="Stupka E."/>
            <person name="Sugiura K."/>
            <person name="Sultana R."/>
            <person name="Takenaka Y."/>
            <person name="Taki K."/>
            <person name="Tammoja K."/>
            <person name="Tan S.L."/>
            <person name="Tang S."/>
            <person name="Taylor M.S."/>
            <person name="Tegner J."/>
            <person name="Teichmann S.A."/>
            <person name="Ueda H.R."/>
            <person name="van Nimwegen E."/>
            <person name="Verardo R."/>
            <person name="Wei C.L."/>
            <person name="Yagi K."/>
            <person name="Yamanishi H."/>
            <person name="Zabarovsky E."/>
            <person name="Zhu S."/>
            <person name="Zimmer A."/>
            <person name="Hide W."/>
            <person name="Bult C."/>
            <person name="Grimmond S.M."/>
            <person name="Teasdale R.D."/>
            <person name="Liu E.T."/>
            <person name="Brusic V."/>
            <person name="Quackenbush J."/>
            <person name="Wahlestedt C."/>
            <person name="Mattick J.S."/>
            <person name="Hume D.A."/>
            <person name="Kai C."/>
            <person name="Sasaki D."/>
            <person name="Tomaru Y."/>
            <person name="Fukuda S."/>
            <person name="Kanamori-Katayama M."/>
            <person name="Suzuki M."/>
            <person name="Aoki J."/>
            <person name="Arakawa T."/>
            <person name="Iida J."/>
            <person name="Imamura K."/>
            <person name="Itoh M."/>
            <person name="Kato T."/>
            <person name="Kawaji H."/>
            <person name="Kawagashira N."/>
            <person name="Kawashima T."/>
            <person name="Kojima M."/>
            <person name="Kondo S."/>
            <person name="Konno H."/>
            <person name="Nakano K."/>
            <person name="Ninomiya N."/>
            <person name="Nishio T."/>
            <person name="Okada M."/>
            <person name="Plessy C."/>
            <person name="Shibata K."/>
            <person name="Shiraki T."/>
            <person name="Suzuki S."/>
            <person name="Tagami M."/>
            <person name="Waki K."/>
            <person name="Watahiki A."/>
            <person name="Okamura-Oho Y."/>
            <person name="Suzuki H."/>
            <person name="Kawai J."/>
            <person name="Hayashizaki Y."/>
        </authorList>
    </citation>
    <scope>NUCLEOTIDE SEQUENCE [LARGE SCALE MRNA]</scope>
    <source>
        <strain>C57BL/6J</strain>
        <strain>NOD</strain>
        <tissue>Kidney</tissue>
        <tissue>Mammary gland</tissue>
    </source>
</reference>
<reference key="2">
    <citation type="journal article" date="2004" name="Genome Res.">
        <title>The status, quality, and expansion of the NIH full-length cDNA project: the Mammalian Gene Collection (MGC).</title>
        <authorList>
            <consortium name="The MGC Project Team"/>
        </authorList>
    </citation>
    <scope>NUCLEOTIDE SEQUENCE [LARGE SCALE MRNA]</scope>
    <source>
        <strain>C57BL/6J</strain>
        <tissue>Brain</tissue>
    </source>
</reference>
<reference key="3">
    <citation type="journal article" date="2008" name="Brain">
        <title>A missense mutation in the murine Opa3 gene models human Costeff syndrome.</title>
        <authorList>
            <person name="Davies V.J."/>
            <person name="Powell K.A."/>
            <person name="White K.E."/>
            <person name="Yip W."/>
            <person name="Hogan V."/>
            <person name="Hollins A.J."/>
            <person name="Davies J.R."/>
            <person name="Piechota M."/>
            <person name="Brownstein D.G."/>
            <person name="Moat S.J."/>
            <person name="Nichols P.P."/>
            <person name="Wride M.A."/>
            <person name="Boulton M.E."/>
            <person name="Votruba M."/>
        </authorList>
    </citation>
    <scope>MUTAGENESIS OF LEU-122</scope>
</reference>
<reference key="4">
    <citation type="journal article" date="2010" name="Cell">
        <title>A tissue-specific atlas of mouse protein phosphorylation and expression.</title>
        <authorList>
            <person name="Huttlin E.L."/>
            <person name="Jedrychowski M.P."/>
            <person name="Elias J.E."/>
            <person name="Goswami T."/>
            <person name="Rad R."/>
            <person name="Beausoleil S.A."/>
            <person name="Villen J."/>
            <person name="Haas W."/>
            <person name="Sowa M.E."/>
            <person name="Gygi S.P."/>
        </authorList>
    </citation>
    <scope>IDENTIFICATION BY MASS SPECTROMETRY [LARGE SCALE ANALYSIS]</scope>
    <source>
        <tissue>Brain</tissue>
        <tissue>Brown adipose tissue</tissue>
        <tissue>Heart</tissue>
        <tissue>Liver</tissue>
        <tissue>Testis</tissue>
    </source>
</reference>
<protein>
    <recommendedName>
        <fullName>Optic atrophy 3 protein homolog</fullName>
    </recommendedName>
</protein>
<name>OPA3_MOUSE</name>
<evidence type="ECO:0000250" key="1"/>
<evidence type="ECO:0000255" key="2"/>
<evidence type="ECO:0000269" key="3">
    <source>
    </source>
</evidence>
<evidence type="ECO:0000305" key="4"/>
<gene>
    <name type="primary">Opa3</name>
</gene>
<dbReference type="EMBL" id="AK052774">
    <property type="protein sequence ID" value="BAC35141.1"/>
    <property type="molecule type" value="mRNA"/>
</dbReference>
<dbReference type="EMBL" id="AK133480">
    <property type="protein sequence ID" value="BAE21678.1"/>
    <property type="molecule type" value="mRNA"/>
</dbReference>
<dbReference type="EMBL" id="AK154960">
    <property type="protein sequence ID" value="BAE32955.1"/>
    <property type="molecule type" value="mRNA"/>
</dbReference>
<dbReference type="EMBL" id="AK164755">
    <property type="protein sequence ID" value="BAE37900.1"/>
    <property type="molecule type" value="mRNA"/>
</dbReference>
<dbReference type="EMBL" id="AK170977">
    <property type="protein sequence ID" value="BAE42155.1"/>
    <property type="molecule type" value="mRNA"/>
</dbReference>
<dbReference type="EMBL" id="BC094601">
    <property type="protein sequence ID" value="AAH94601.1"/>
    <property type="molecule type" value="mRNA"/>
</dbReference>
<dbReference type="EMBL" id="BC132309">
    <property type="protein sequence ID" value="AAI32310.1"/>
    <property type="molecule type" value="mRNA"/>
</dbReference>
<dbReference type="EMBL" id="BC132311">
    <property type="protein sequence ID" value="AAI32312.1"/>
    <property type="molecule type" value="mRNA"/>
</dbReference>
<dbReference type="CCDS" id="CCDS20894.1"/>
<dbReference type="RefSeq" id="NP_997408.2">
    <property type="nucleotide sequence ID" value="NM_207525.4"/>
</dbReference>
<dbReference type="SMR" id="Q505D7"/>
<dbReference type="BioGRID" id="240079">
    <property type="interactions" value="4"/>
</dbReference>
<dbReference type="FunCoup" id="Q505D7">
    <property type="interactions" value="1334"/>
</dbReference>
<dbReference type="STRING" id="10090.ENSMUSP00000069965"/>
<dbReference type="GlyGen" id="Q505D7">
    <property type="glycosylation" value="1 site, 1 O-linked glycan (1 site)"/>
</dbReference>
<dbReference type="iPTMnet" id="Q505D7"/>
<dbReference type="PhosphoSitePlus" id="Q505D7"/>
<dbReference type="SwissPalm" id="Q505D7"/>
<dbReference type="jPOST" id="Q505D7"/>
<dbReference type="PaxDb" id="10090-ENSMUSP00000069965"/>
<dbReference type="PeptideAtlas" id="Q505D7"/>
<dbReference type="ProteomicsDB" id="295474"/>
<dbReference type="Pumba" id="Q505D7"/>
<dbReference type="Antibodypedia" id="31359">
    <property type="antibodies" value="206 antibodies from 26 providers"/>
</dbReference>
<dbReference type="Ensembl" id="ENSMUST00000063976.9">
    <property type="protein sequence ID" value="ENSMUSP00000069965.9"/>
    <property type="gene ID" value="ENSMUSG00000052214.10"/>
</dbReference>
<dbReference type="GeneID" id="403187"/>
<dbReference type="KEGG" id="mmu:403187"/>
<dbReference type="UCSC" id="uc009flc.1">
    <property type="organism name" value="mouse"/>
</dbReference>
<dbReference type="AGR" id="MGI:2686271"/>
<dbReference type="CTD" id="80207"/>
<dbReference type="MGI" id="MGI:2686271">
    <property type="gene designation" value="Opa3"/>
</dbReference>
<dbReference type="VEuPathDB" id="HostDB:ENSMUSG00000052214"/>
<dbReference type="eggNOG" id="KOG3335">
    <property type="taxonomic scope" value="Eukaryota"/>
</dbReference>
<dbReference type="GeneTree" id="ENSGT00390000009795"/>
<dbReference type="HOGENOM" id="CLU_074707_5_1_1"/>
<dbReference type="InParanoid" id="Q505D7"/>
<dbReference type="OMA" id="WAEFEGT"/>
<dbReference type="OrthoDB" id="90464at9989"/>
<dbReference type="PhylomeDB" id="Q505D7"/>
<dbReference type="TreeFam" id="TF314653"/>
<dbReference type="BioGRID-ORCS" id="403187">
    <property type="hits" value="4 hits in 75 CRISPR screens"/>
</dbReference>
<dbReference type="CD-CODE" id="CE726F99">
    <property type="entry name" value="Postsynaptic density"/>
</dbReference>
<dbReference type="ChiTaRS" id="Opa3">
    <property type="organism name" value="mouse"/>
</dbReference>
<dbReference type="PRO" id="PR:Q505D7"/>
<dbReference type="Proteomes" id="UP000000589">
    <property type="component" value="Chromosome 7"/>
</dbReference>
<dbReference type="RNAct" id="Q505D7">
    <property type="molecule type" value="protein"/>
</dbReference>
<dbReference type="Bgee" id="ENSMUSG00000052214">
    <property type="expression patterns" value="Expressed in interventricular septum and 258 other cell types or tissues"/>
</dbReference>
<dbReference type="ExpressionAtlas" id="Q505D7">
    <property type="expression patterns" value="baseline and differential"/>
</dbReference>
<dbReference type="GO" id="GO:0005739">
    <property type="term" value="C:mitochondrion"/>
    <property type="evidence" value="ECO:0000314"/>
    <property type="project" value="MGI"/>
</dbReference>
<dbReference type="GO" id="GO:0060348">
    <property type="term" value="P:bone development"/>
    <property type="evidence" value="ECO:0000315"/>
    <property type="project" value="MGI"/>
</dbReference>
<dbReference type="GO" id="GO:0045444">
    <property type="term" value="P:fat cell differentiation"/>
    <property type="evidence" value="ECO:0000315"/>
    <property type="project" value="MGI"/>
</dbReference>
<dbReference type="GO" id="GO:0007005">
    <property type="term" value="P:mitochondrion organization"/>
    <property type="evidence" value="ECO:0000315"/>
    <property type="project" value="MGI"/>
</dbReference>
<dbReference type="GO" id="GO:0050905">
    <property type="term" value="P:neuromuscular process"/>
    <property type="evidence" value="ECO:0000315"/>
    <property type="project" value="MGI"/>
</dbReference>
<dbReference type="GO" id="GO:0040008">
    <property type="term" value="P:regulation of growth"/>
    <property type="evidence" value="ECO:0000315"/>
    <property type="project" value="MGI"/>
</dbReference>
<dbReference type="GO" id="GO:0019216">
    <property type="term" value="P:regulation of lipid metabolic process"/>
    <property type="evidence" value="ECO:0000315"/>
    <property type="project" value="MGI"/>
</dbReference>
<dbReference type="GO" id="GO:0007601">
    <property type="term" value="P:visual perception"/>
    <property type="evidence" value="ECO:0007669"/>
    <property type="project" value="Ensembl"/>
</dbReference>
<dbReference type="InterPro" id="IPR010754">
    <property type="entry name" value="OPA3-like"/>
</dbReference>
<dbReference type="PANTHER" id="PTHR12499:SF0">
    <property type="entry name" value="OPTIC ATROPHY 3 PROTEIN"/>
    <property type="match status" value="1"/>
</dbReference>
<dbReference type="PANTHER" id="PTHR12499">
    <property type="entry name" value="OPTIC ATROPHY 3 PROTEIN OPA3"/>
    <property type="match status" value="1"/>
</dbReference>
<dbReference type="Pfam" id="PF07047">
    <property type="entry name" value="OPA3"/>
    <property type="match status" value="1"/>
</dbReference>
<comment type="function">
    <text evidence="1">May play some role in mitochondrial processes.</text>
</comment>
<comment type="subcellular location">
    <subcellularLocation>
        <location evidence="1">Mitochondrion</location>
    </subcellularLocation>
</comment>
<comment type="similarity">
    <text evidence="4">Belongs to the OPA3 family.</text>
</comment>
<proteinExistence type="evidence at protein level"/>